<organism>
    <name type="scientific">Anaeromyxobacter dehalogenans (strain 2CP-C)</name>
    <dbReference type="NCBI Taxonomy" id="290397"/>
    <lineage>
        <taxon>Bacteria</taxon>
        <taxon>Pseudomonadati</taxon>
        <taxon>Myxococcota</taxon>
        <taxon>Myxococcia</taxon>
        <taxon>Myxococcales</taxon>
        <taxon>Cystobacterineae</taxon>
        <taxon>Anaeromyxobacteraceae</taxon>
        <taxon>Anaeromyxobacter</taxon>
    </lineage>
</organism>
<dbReference type="EC" id="2.7.7.56" evidence="1"/>
<dbReference type="EMBL" id="CP000251">
    <property type="protein sequence ID" value="ABC83128.1"/>
    <property type="molecule type" value="Genomic_DNA"/>
</dbReference>
<dbReference type="RefSeq" id="WP_011422410.1">
    <property type="nucleotide sequence ID" value="NC_007760.1"/>
</dbReference>
<dbReference type="SMR" id="Q2IEX1"/>
<dbReference type="STRING" id="290397.Adeh_3361"/>
<dbReference type="KEGG" id="ade:Adeh_3361"/>
<dbReference type="eggNOG" id="COG0689">
    <property type="taxonomic scope" value="Bacteria"/>
</dbReference>
<dbReference type="HOGENOM" id="CLU_050858_0_0_7"/>
<dbReference type="OrthoDB" id="9802265at2"/>
<dbReference type="Proteomes" id="UP000001935">
    <property type="component" value="Chromosome"/>
</dbReference>
<dbReference type="GO" id="GO:0000175">
    <property type="term" value="F:3'-5'-RNA exonuclease activity"/>
    <property type="evidence" value="ECO:0007669"/>
    <property type="project" value="UniProtKB-UniRule"/>
</dbReference>
<dbReference type="GO" id="GO:0000049">
    <property type="term" value="F:tRNA binding"/>
    <property type="evidence" value="ECO:0007669"/>
    <property type="project" value="UniProtKB-UniRule"/>
</dbReference>
<dbReference type="GO" id="GO:0009022">
    <property type="term" value="F:tRNA nucleotidyltransferase activity"/>
    <property type="evidence" value="ECO:0007669"/>
    <property type="project" value="UniProtKB-UniRule"/>
</dbReference>
<dbReference type="GO" id="GO:0016075">
    <property type="term" value="P:rRNA catabolic process"/>
    <property type="evidence" value="ECO:0007669"/>
    <property type="project" value="UniProtKB-UniRule"/>
</dbReference>
<dbReference type="GO" id="GO:0006364">
    <property type="term" value="P:rRNA processing"/>
    <property type="evidence" value="ECO:0007669"/>
    <property type="project" value="UniProtKB-KW"/>
</dbReference>
<dbReference type="GO" id="GO:0008033">
    <property type="term" value="P:tRNA processing"/>
    <property type="evidence" value="ECO:0007669"/>
    <property type="project" value="UniProtKB-UniRule"/>
</dbReference>
<dbReference type="CDD" id="cd11362">
    <property type="entry name" value="RNase_PH_bact"/>
    <property type="match status" value="1"/>
</dbReference>
<dbReference type="FunFam" id="3.30.230.70:FF:000003">
    <property type="entry name" value="Ribonuclease PH"/>
    <property type="match status" value="1"/>
</dbReference>
<dbReference type="Gene3D" id="3.30.230.70">
    <property type="entry name" value="GHMP Kinase, N-terminal domain"/>
    <property type="match status" value="1"/>
</dbReference>
<dbReference type="HAMAP" id="MF_00564">
    <property type="entry name" value="RNase_PH"/>
    <property type="match status" value="1"/>
</dbReference>
<dbReference type="InterPro" id="IPR001247">
    <property type="entry name" value="ExoRNase_PH_dom1"/>
</dbReference>
<dbReference type="InterPro" id="IPR015847">
    <property type="entry name" value="ExoRNase_PH_dom2"/>
</dbReference>
<dbReference type="InterPro" id="IPR036345">
    <property type="entry name" value="ExoRNase_PH_dom2_sf"/>
</dbReference>
<dbReference type="InterPro" id="IPR027408">
    <property type="entry name" value="PNPase/RNase_PH_dom_sf"/>
</dbReference>
<dbReference type="InterPro" id="IPR020568">
    <property type="entry name" value="Ribosomal_Su5_D2-typ_SF"/>
</dbReference>
<dbReference type="InterPro" id="IPR050080">
    <property type="entry name" value="RNase_PH"/>
</dbReference>
<dbReference type="InterPro" id="IPR002381">
    <property type="entry name" value="RNase_PH_bac-type"/>
</dbReference>
<dbReference type="InterPro" id="IPR018336">
    <property type="entry name" value="RNase_PH_CS"/>
</dbReference>
<dbReference type="NCBIfam" id="TIGR01966">
    <property type="entry name" value="RNasePH"/>
    <property type="match status" value="1"/>
</dbReference>
<dbReference type="PANTHER" id="PTHR11953">
    <property type="entry name" value="EXOSOME COMPLEX COMPONENT"/>
    <property type="match status" value="1"/>
</dbReference>
<dbReference type="PANTHER" id="PTHR11953:SF0">
    <property type="entry name" value="EXOSOME COMPLEX COMPONENT RRP41"/>
    <property type="match status" value="1"/>
</dbReference>
<dbReference type="Pfam" id="PF01138">
    <property type="entry name" value="RNase_PH"/>
    <property type="match status" value="1"/>
</dbReference>
<dbReference type="Pfam" id="PF03725">
    <property type="entry name" value="RNase_PH_C"/>
    <property type="match status" value="1"/>
</dbReference>
<dbReference type="SUPFAM" id="SSF55666">
    <property type="entry name" value="Ribonuclease PH domain 2-like"/>
    <property type="match status" value="1"/>
</dbReference>
<dbReference type="SUPFAM" id="SSF54211">
    <property type="entry name" value="Ribosomal protein S5 domain 2-like"/>
    <property type="match status" value="1"/>
</dbReference>
<dbReference type="PROSITE" id="PS01277">
    <property type="entry name" value="RIBONUCLEASE_PH"/>
    <property type="match status" value="1"/>
</dbReference>
<proteinExistence type="inferred from homology"/>
<protein>
    <recommendedName>
        <fullName evidence="1">Ribonuclease PH</fullName>
        <shortName evidence="1">RNase PH</shortName>
        <ecNumber evidence="1">2.7.7.56</ecNumber>
    </recommendedName>
    <alternativeName>
        <fullName evidence="1">tRNA nucleotidyltransferase</fullName>
    </alternativeName>
</protein>
<comment type="function">
    <text evidence="1">Phosphorolytic 3'-5' exoribonuclease that plays an important role in tRNA 3'-end maturation. Removes nucleotide residues following the 3'-CCA terminus of tRNAs; can also add nucleotides to the ends of RNA molecules by using nucleoside diphosphates as substrates, but this may not be physiologically important. Probably plays a role in initiation of 16S rRNA degradation (leading to ribosome degradation) during starvation.</text>
</comment>
<comment type="catalytic activity">
    <reaction evidence="1">
        <text>tRNA(n+1) + phosphate = tRNA(n) + a ribonucleoside 5'-diphosphate</text>
        <dbReference type="Rhea" id="RHEA:10628"/>
        <dbReference type="Rhea" id="RHEA-COMP:17343"/>
        <dbReference type="Rhea" id="RHEA-COMP:17344"/>
        <dbReference type="ChEBI" id="CHEBI:43474"/>
        <dbReference type="ChEBI" id="CHEBI:57930"/>
        <dbReference type="ChEBI" id="CHEBI:173114"/>
        <dbReference type="EC" id="2.7.7.56"/>
    </reaction>
</comment>
<comment type="subunit">
    <text evidence="1">Homohexameric ring arranged as a trimer of dimers.</text>
</comment>
<comment type="similarity">
    <text evidence="1">Belongs to the RNase PH family.</text>
</comment>
<accession>Q2IEX1</accession>
<sequence length="239" mass="25676">MRKNGRGPLDLRPILLEPRVSKHAEGSCLVRFGDTHVLCTASVDEKVPPHVYGTGAGWVTAEYGMLPRSTHERMQREAARGKQTGRTLEIQRLVGRALRAAVDLRAIGPRTVTLDCDVIQADGGTRTAAITGAYVALVQAVRSIQKRKQLAHDPVKRSVAAVSVGIVAGEVHLDLDYDEDSTAEVDMNVVATGEGALVEVQGTAEGKPFARAELDRMLDAALAGLSRLKELQEAALRTP</sequence>
<name>RNPH_ANADE</name>
<keyword id="KW-0548">Nucleotidyltransferase</keyword>
<keyword id="KW-1185">Reference proteome</keyword>
<keyword id="KW-0694">RNA-binding</keyword>
<keyword id="KW-0698">rRNA processing</keyword>
<keyword id="KW-0808">Transferase</keyword>
<keyword id="KW-0819">tRNA processing</keyword>
<keyword id="KW-0820">tRNA-binding</keyword>
<evidence type="ECO:0000255" key="1">
    <source>
        <dbReference type="HAMAP-Rule" id="MF_00564"/>
    </source>
</evidence>
<reference key="1">
    <citation type="submission" date="2006-01" db="EMBL/GenBank/DDBJ databases">
        <title>Complete sequence of Anaeromyxobacter dehalogenans 2CP-C.</title>
        <authorList>
            <person name="Copeland A."/>
            <person name="Lucas S."/>
            <person name="Lapidus A."/>
            <person name="Barry K."/>
            <person name="Detter J.C."/>
            <person name="Glavina T."/>
            <person name="Hammon N."/>
            <person name="Israni S."/>
            <person name="Pitluck S."/>
            <person name="Brettin T."/>
            <person name="Bruce D."/>
            <person name="Han C."/>
            <person name="Tapia R."/>
            <person name="Gilna P."/>
            <person name="Kiss H."/>
            <person name="Schmutz J."/>
            <person name="Larimer F."/>
            <person name="Land M."/>
            <person name="Kyrpides N."/>
            <person name="Anderson I."/>
            <person name="Sanford R.A."/>
            <person name="Ritalahti K.M."/>
            <person name="Thomas H.S."/>
            <person name="Kirby J.R."/>
            <person name="Zhulin I.B."/>
            <person name="Loeffler F.E."/>
            <person name="Richardson P."/>
        </authorList>
    </citation>
    <scope>NUCLEOTIDE SEQUENCE [LARGE SCALE GENOMIC DNA]</scope>
    <source>
        <strain>2CP-C</strain>
    </source>
</reference>
<feature type="chain" id="PRO_1000024771" description="Ribonuclease PH">
    <location>
        <begin position="1"/>
        <end position="239"/>
    </location>
</feature>
<feature type="binding site" evidence="1">
    <location>
        <position position="86"/>
    </location>
    <ligand>
        <name>phosphate</name>
        <dbReference type="ChEBI" id="CHEBI:43474"/>
        <note>substrate</note>
    </ligand>
</feature>
<feature type="binding site" evidence="1">
    <location>
        <begin position="124"/>
        <end position="126"/>
    </location>
    <ligand>
        <name>phosphate</name>
        <dbReference type="ChEBI" id="CHEBI:43474"/>
        <note>substrate</note>
    </ligand>
</feature>
<gene>
    <name evidence="1" type="primary">rph</name>
    <name type="ordered locus">Adeh_3361</name>
</gene>